<dbReference type="EMBL" id="CP000747">
    <property type="protein sequence ID" value="ACG79384.1"/>
    <property type="molecule type" value="Genomic_DNA"/>
</dbReference>
<dbReference type="RefSeq" id="WP_012523522.1">
    <property type="nucleotide sequence ID" value="NC_011144.1"/>
</dbReference>
<dbReference type="SMR" id="B4R9C4"/>
<dbReference type="STRING" id="450851.PHZ_c2975"/>
<dbReference type="KEGG" id="pzu:PHZ_c2975"/>
<dbReference type="eggNOG" id="COG0291">
    <property type="taxonomic scope" value="Bacteria"/>
</dbReference>
<dbReference type="HOGENOM" id="CLU_169643_2_1_5"/>
<dbReference type="OrthoDB" id="9804851at2"/>
<dbReference type="Proteomes" id="UP000001868">
    <property type="component" value="Chromosome"/>
</dbReference>
<dbReference type="GO" id="GO:0022625">
    <property type="term" value="C:cytosolic large ribosomal subunit"/>
    <property type="evidence" value="ECO:0007669"/>
    <property type="project" value="TreeGrafter"/>
</dbReference>
<dbReference type="GO" id="GO:0003735">
    <property type="term" value="F:structural constituent of ribosome"/>
    <property type="evidence" value="ECO:0007669"/>
    <property type="project" value="InterPro"/>
</dbReference>
<dbReference type="GO" id="GO:0006412">
    <property type="term" value="P:translation"/>
    <property type="evidence" value="ECO:0007669"/>
    <property type="project" value="UniProtKB-UniRule"/>
</dbReference>
<dbReference type="FunFam" id="4.10.410.60:FF:000001">
    <property type="entry name" value="50S ribosomal protein L35"/>
    <property type="match status" value="1"/>
</dbReference>
<dbReference type="Gene3D" id="4.10.410.60">
    <property type="match status" value="1"/>
</dbReference>
<dbReference type="HAMAP" id="MF_00514">
    <property type="entry name" value="Ribosomal_bL35"/>
    <property type="match status" value="1"/>
</dbReference>
<dbReference type="InterPro" id="IPR001706">
    <property type="entry name" value="Ribosomal_bL35"/>
</dbReference>
<dbReference type="InterPro" id="IPR021137">
    <property type="entry name" value="Ribosomal_bL35-like"/>
</dbReference>
<dbReference type="InterPro" id="IPR018265">
    <property type="entry name" value="Ribosomal_bL35_CS"/>
</dbReference>
<dbReference type="InterPro" id="IPR037229">
    <property type="entry name" value="Ribosomal_bL35_sf"/>
</dbReference>
<dbReference type="NCBIfam" id="TIGR00001">
    <property type="entry name" value="rpmI_bact"/>
    <property type="match status" value="1"/>
</dbReference>
<dbReference type="PANTHER" id="PTHR33343">
    <property type="entry name" value="54S RIBOSOMAL PROTEIN BL35M"/>
    <property type="match status" value="1"/>
</dbReference>
<dbReference type="PANTHER" id="PTHR33343:SF1">
    <property type="entry name" value="LARGE RIBOSOMAL SUBUNIT PROTEIN BL35M"/>
    <property type="match status" value="1"/>
</dbReference>
<dbReference type="Pfam" id="PF01632">
    <property type="entry name" value="Ribosomal_L35p"/>
    <property type="match status" value="1"/>
</dbReference>
<dbReference type="PRINTS" id="PR00064">
    <property type="entry name" value="RIBOSOMALL35"/>
</dbReference>
<dbReference type="SUPFAM" id="SSF143034">
    <property type="entry name" value="L35p-like"/>
    <property type="match status" value="1"/>
</dbReference>
<dbReference type="PROSITE" id="PS00936">
    <property type="entry name" value="RIBOSOMAL_L35"/>
    <property type="match status" value="1"/>
</dbReference>
<keyword id="KW-1185">Reference proteome</keyword>
<keyword id="KW-0687">Ribonucleoprotein</keyword>
<keyword id="KW-0689">Ribosomal protein</keyword>
<comment type="similarity">
    <text evidence="1">Belongs to the bacterial ribosomal protein bL35 family.</text>
</comment>
<evidence type="ECO:0000255" key="1">
    <source>
        <dbReference type="HAMAP-Rule" id="MF_00514"/>
    </source>
</evidence>
<evidence type="ECO:0000305" key="2"/>
<gene>
    <name evidence="1" type="primary">rpmI</name>
    <name type="ordered locus">PHZ_c2975</name>
</gene>
<name>RL35_PHEZH</name>
<reference key="1">
    <citation type="journal article" date="2008" name="BMC Genomics">
        <title>Complete genome of Phenylobacterium zucineum - a novel facultative intracellular bacterium isolated from human erythroleukemia cell line K562.</title>
        <authorList>
            <person name="Luo Y."/>
            <person name="Xu X."/>
            <person name="Ding Z."/>
            <person name="Liu Z."/>
            <person name="Zhang B."/>
            <person name="Yan Z."/>
            <person name="Sun J."/>
            <person name="Hu S."/>
            <person name="Hu X."/>
        </authorList>
    </citation>
    <scope>NUCLEOTIDE SEQUENCE [LARGE SCALE GENOMIC DNA]</scope>
    <source>
        <strain>HLK1</strain>
    </source>
</reference>
<organism>
    <name type="scientific">Phenylobacterium zucineum (strain HLK1)</name>
    <dbReference type="NCBI Taxonomy" id="450851"/>
    <lineage>
        <taxon>Bacteria</taxon>
        <taxon>Pseudomonadati</taxon>
        <taxon>Pseudomonadota</taxon>
        <taxon>Alphaproteobacteria</taxon>
        <taxon>Caulobacterales</taxon>
        <taxon>Caulobacteraceae</taxon>
        <taxon>Phenylobacterium</taxon>
    </lineage>
</organism>
<feature type="chain" id="PRO_1000127387" description="Large ribosomal subunit protein bL35">
    <location>
        <begin position="1"/>
        <end position="66"/>
    </location>
</feature>
<accession>B4R9C4</accession>
<sequence>MPKLKTKSGVKKRFKMTATGKLKAGVAGKRHRLISHNGKYIRQNRGTKVMSEADAKIIKSWLPYGL</sequence>
<proteinExistence type="inferred from homology"/>
<protein>
    <recommendedName>
        <fullName evidence="1">Large ribosomal subunit protein bL35</fullName>
    </recommendedName>
    <alternativeName>
        <fullName evidence="2">50S ribosomal protein L35</fullName>
    </alternativeName>
</protein>